<sequence length="341" mass="37706">MSTDKISVLLNWHATPYHLPIFVAQSKGFFAKEGIKVAILEPNDPSDVTELIGSGKADLGCKAMIHTLAGKARGFPIKSIGTLMDEPFTGVIYLEGSGITSDFRSLKGKRIGYVGEFGKIQIDELTKYYGMTSKDYTAVRCGMNVSKAIIEGTIDAGIGLENIQQVELEEWCKANNRPASDVKMLRIDELAELGCCCFCSILYIANEDWLKDHPKETAAFMRAVKAGADAMFADPRGSWAEYCKVKPAMNTPLNRIMFDRSFNYMSQDLINVSRDWNKVTNYSKRLGIVPEDFVSNYTNEFVQWEVAPEGGEAEGLAKQQEMKTLQAHVAEHGGVLQAVTA</sequence>
<gene>
    <name evidence="6" type="primary">PIG1</name>
    <name evidence="5" type="synonym">THI1</name>
</gene>
<protein>
    <recommendedName>
        <fullName evidence="2">4-amino-5-hydroxymethyl-2-methylpyrimidine phosphate synthase</fullName>
        <shortName evidence="2">HMP-P synthase</shortName>
        <shortName evidence="2">Hydroxymethylpyrimidine phosphate synthase</shortName>
        <ecNumber evidence="2">2.-.-.-</ecNumber>
    </recommendedName>
    <alternativeName>
        <fullName evidence="6">Planta-induced rust protein 1</fullName>
    </alternativeName>
    <alternativeName>
        <fullName evidence="5">Thiamine biosynthesis protein 1</fullName>
    </alternativeName>
    <alternativeName>
        <fullName evidence="1">Thiamine pyrimidine synthase</fullName>
    </alternativeName>
</protein>
<dbReference type="EC" id="2.-.-.-" evidence="2"/>
<dbReference type="EMBL" id="U81789">
    <property type="protein sequence ID" value="AAB39877.1"/>
    <property type="molecule type" value="mRNA"/>
</dbReference>
<dbReference type="EMBL" id="AJ250426">
    <property type="protein sequence ID" value="CAB59855.1"/>
    <property type="molecule type" value="Genomic_DNA"/>
</dbReference>
<dbReference type="SMR" id="O00057"/>
<dbReference type="UniPathway" id="UPA00060"/>
<dbReference type="GO" id="GO:0106344">
    <property type="term" value="F:4-amino-5-hydroxymethyl-2-methylpyrimidine phosphate synthase activity from histidine and PLP"/>
    <property type="evidence" value="ECO:0000250"/>
    <property type="project" value="UniProtKB"/>
</dbReference>
<dbReference type="GO" id="GO:0046872">
    <property type="term" value="F:metal ion binding"/>
    <property type="evidence" value="ECO:0007669"/>
    <property type="project" value="UniProtKB-KW"/>
</dbReference>
<dbReference type="GO" id="GO:0009228">
    <property type="term" value="P:thiamine biosynthetic process"/>
    <property type="evidence" value="ECO:0007669"/>
    <property type="project" value="UniProtKB-KW"/>
</dbReference>
<dbReference type="GO" id="GO:0009229">
    <property type="term" value="P:thiamine diphosphate biosynthetic process"/>
    <property type="evidence" value="ECO:0007669"/>
    <property type="project" value="UniProtKB-UniPathway"/>
</dbReference>
<dbReference type="CDD" id="cd13650">
    <property type="entry name" value="PBP2_THI5"/>
    <property type="match status" value="1"/>
</dbReference>
<dbReference type="FunFam" id="3.40.190.10:FF:000187">
    <property type="entry name" value="4-amino-5-hydroxymethyl-2-methylpyrimidine phosphate synthase THI5"/>
    <property type="match status" value="1"/>
</dbReference>
<dbReference type="Gene3D" id="3.40.190.10">
    <property type="entry name" value="Periplasmic binding protein-like II"/>
    <property type="match status" value="2"/>
</dbReference>
<dbReference type="InterPro" id="IPR027939">
    <property type="entry name" value="NMT1/THI5"/>
</dbReference>
<dbReference type="InterPro" id="IPR015168">
    <property type="entry name" value="SsuA/THI5"/>
</dbReference>
<dbReference type="PANTHER" id="PTHR31528">
    <property type="entry name" value="4-AMINO-5-HYDROXYMETHYL-2-METHYLPYRIMIDINE PHOSPHATE SYNTHASE THI11-RELATED"/>
    <property type="match status" value="1"/>
</dbReference>
<dbReference type="PANTHER" id="PTHR31528:SF1">
    <property type="entry name" value="4-AMINO-5-HYDROXYMETHYL-2-METHYLPYRIMIDINE PHOSPHATE SYNTHASE THI11-RELATED"/>
    <property type="match status" value="1"/>
</dbReference>
<dbReference type="Pfam" id="PF09084">
    <property type="entry name" value="NMT1"/>
    <property type="match status" value="1"/>
</dbReference>
<dbReference type="SUPFAM" id="SSF53850">
    <property type="entry name" value="Periplasmic binding protein-like II"/>
    <property type="match status" value="1"/>
</dbReference>
<feature type="chain" id="PRO_0000211623" description="4-amino-5-hydroxymethyl-2-methylpyrimidine phosphate synthase">
    <location>
        <begin position="1"/>
        <end position="341"/>
    </location>
</feature>
<feature type="short sequence motif" description="CCCFC; essential for catalytic activity, may be the site of iron coordination" evidence="2">
    <location>
        <begin position="195"/>
        <end position="199"/>
    </location>
</feature>
<feature type="active site" evidence="2">
    <location>
        <position position="66"/>
    </location>
</feature>
<feature type="binding site" evidence="2">
    <location>
        <begin position="115"/>
        <end position="118"/>
    </location>
    <ligand>
        <name>pyridoxal 5'-phosphate</name>
        <dbReference type="ChEBI" id="CHEBI:597326"/>
    </ligand>
</feature>
<feature type="modified residue" description="N6-(pyridoxal phosphate)lysine" evidence="2">
    <location>
        <position position="62"/>
    </location>
</feature>
<name>NMT1_UROFA</name>
<organism>
    <name type="scientific">Uromyces fabae</name>
    <name type="common">Rust fungus</name>
    <dbReference type="NCBI Taxonomy" id="55588"/>
    <lineage>
        <taxon>Eukaryota</taxon>
        <taxon>Fungi</taxon>
        <taxon>Dikarya</taxon>
        <taxon>Basidiomycota</taxon>
        <taxon>Pucciniomycotina</taxon>
        <taxon>Pucciniomycetes</taxon>
        <taxon>Pucciniales</taxon>
        <taxon>Pucciniaceae</taxon>
        <taxon>Uromyces</taxon>
    </lineage>
</organism>
<accession>O00057</accession>
<evidence type="ECO:0000250" key="1">
    <source>
        <dbReference type="UniProtKB" id="C4YMW2"/>
    </source>
</evidence>
<evidence type="ECO:0000250" key="2">
    <source>
        <dbReference type="UniProtKB" id="P43534"/>
    </source>
</evidence>
<evidence type="ECO:0000269" key="3">
    <source>
    </source>
</evidence>
<evidence type="ECO:0000269" key="4">
    <source>
    </source>
</evidence>
<evidence type="ECO:0000303" key="5">
    <source>
    </source>
</evidence>
<evidence type="ECO:0000303" key="6">
    <source>
    </source>
</evidence>
<evidence type="ECO:0000305" key="7"/>
<evidence type="ECO:0000305" key="8">
    <source>
    </source>
</evidence>
<keyword id="KW-0408">Iron</keyword>
<keyword id="KW-0479">Metal-binding</keyword>
<keyword id="KW-0663">Pyridoxal phosphate</keyword>
<keyword id="KW-0784">Thiamine biosynthesis</keyword>
<keyword id="KW-0808">Transferase</keyword>
<comment type="function">
    <text evidence="2">Responsible for the formation of the pyrimidine heterocycle in the thiamine biosynthesis pathway. Catalyzes the formation of hydroxymethylpyrimidine phosphate (HMP-P) from histidine and pyridoxal phosphate (PLP). The protein uses PLP and the active site histidine to form HMP-P, generating an inactive enzyme. The enzyme can only undergo a single turnover, which suggests it is a suicide enzyme.</text>
</comment>
<comment type="catalytic activity">
    <reaction evidence="2">
        <text>N(6)-(pyridoxal phosphate)-L-lysyl-[4-amino-5-hydroxymethyl-2-methylpyrimidine phosphate synthase] + L-histidyl-[4-amino-5-hydroxymethyl-2-methylpyrimidine phosphate synthase] + 2 Fe(3+) + 4 H2O = L-lysyl-[4-amino-5-hydroxymethyl-2-methylpyrimidine phosphate synthase] + (2S)-2-amino-5-hydroxy-4-oxopentanoyl-[4-amino-5-hydroxymethyl-2-methylpyrimidine phosphate synthase] + 4-amino-2-methyl-5-(phosphooxymethyl)pyrimidine + 3-oxopropanoate + 2 Fe(2+) + 2 H(+)</text>
        <dbReference type="Rhea" id="RHEA:65756"/>
        <dbReference type="Rhea" id="RHEA-COMP:16892"/>
        <dbReference type="Rhea" id="RHEA-COMP:16893"/>
        <dbReference type="Rhea" id="RHEA-COMP:16894"/>
        <dbReference type="Rhea" id="RHEA-COMP:16895"/>
        <dbReference type="ChEBI" id="CHEBI:15377"/>
        <dbReference type="ChEBI" id="CHEBI:15378"/>
        <dbReference type="ChEBI" id="CHEBI:29033"/>
        <dbReference type="ChEBI" id="CHEBI:29034"/>
        <dbReference type="ChEBI" id="CHEBI:29969"/>
        <dbReference type="ChEBI" id="CHEBI:29979"/>
        <dbReference type="ChEBI" id="CHEBI:33190"/>
        <dbReference type="ChEBI" id="CHEBI:58354"/>
        <dbReference type="ChEBI" id="CHEBI:143915"/>
        <dbReference type="ChEBI" id="CHEBI:157692"/>
    </reaction>
    <physiologicalReaction direction="left-to-right" evidence="2">
        <dbReference type="Rhea" id="RHEA:65757"/>
    </physiologicalReaction>
</comment>
<comment type="cofactor">
    <cofactor evidence="2">
        <name>Fe cation</name>
        <dbReference type="ChEBI" id="CHEBI:24875"/>
    </cofactor>
</comment>
<comment type="pathway">
    <text evidence="8">Cofactor biosynthesis; thiamine diphosphate biosynthesis.</text>
</comment>
<comment type="subunit">
    <text evidence="2">Homodimer.</text>
</comment>
<comment type="developmental stage">
    <text evidence="3 4">Haustoria and rust-infected leaves. Also observed, at lower levels, in spores or hyphae formed in vitro.</text>
</comment>
<comment type="similarity">
    <text evidence="7">Belongs to the NMT1/THI5 family.</text>
</comment>
<proteinExistence type="evidence at transcript level"/>
<reference key="1">
    <citation type="journal article" date="1997" name="Mol. Plant Microbe Interact.">
        <title>Characterization of in planta-induced rust genes isolated from a haustorium-specific cDNA library.</title>
        <authorList>
            <person name="Hahn M."/>
            <person name="Mendgen K."/>
        </authorList>
    </citation>
    <scope>NUCLEOTIDE SEQUENCE [MRNA]</scope>
    <scope>DEVELOPMENTAL STAGE</scope>
    <source>
        <strain>I2</strain>
        <tissue>Haustorium</tissue>
    </source>
</reference>
<reference key="2">
    <citation type="journal article" date="2000" name="Mol. Plant Microbe Interact.">
        <title>High level activation of vitamin B1 biosynthesis genes in haustoria of the rust fungus Uromyces fabae.</title>
        <authorList>
            <person name="Sohn J."/>
            <person name="Voegele R.T."/>
            <person name="Mendgen K."/>
            <person name="Hahn M."/>
        </authorList>
    </citation>
    <scope>NUCLEOTIDE SEQUENCE [GENOMIC DNA]</scope>
    <scope>PATHWAY</scope>
    <scope>DEVELOPMENTAL STAGE</scope>
</reference>